<feature type="chain" id="PRO_0000131053" description="Large ribosomal subunit protein uL6">
    <location>
        <begin position="1"/>
        <end position="178"/>
    </location>
</feature>
<comment type="function">
    <text evidence="1">This protein binds to the 23S rRNA, and is important in its secondary structure. It is located near the subunit interface in the base of the L7/L12 stalk, and near the tRNA binding site of the peptidyltransferase center.</text>
</comment>
<comment type="subunit">
    <text evidence="1">Part of the 50S ribosomal subunit.</text>
</comment>
<comment type="similarity">
    <text evidence="1">Belongs to the universal ribosomal protein uL6 family.</text>
</comment>
<reference key="1">
    <citation type="journal article" date="1999" name="Nature">
        <title>Genomic sequence comparison of two unrelated isolates of the human gastric pathogen Helicobacter pylori.</title>
        <authorList>
            <person name="Alm R.A."/>
            <person name="Ling L.-S.L."/>
            <person name="Moir D.T."/>
            <person name="King B.L."/>
            <person name="Brown E.D."/>
            <person name="Doig P.C."/>
            <person name="Smith D.R."/>
            <person name="Noonan B."/>
            <person name="Guild B.C."/>
            <person name="deJonge B.L."/>
            <person name="Carmel G."/>
            <person name="Tummino P.J."/>
            <person name="Caruso A."/>
            <person name="Uria-Nickelsen M."/>
            <person name="Mills D.M."/>
            <person name="Ives C."/>
            <person name="Gibson R."/>
            <person name="Merberg D."/>
            <person name="Mills S.D."/>
            <person name="Jiang Q."/>
            <person name="Taylor D.E."/>
            <person name="Vovis G.F."/>
            <person name="Trust T.J."/>
        </authorList>
    </citation>
    <scope>NUCLEOTIDE SEQUENCE [LARGE SCALE GENOMIC DNA]</scope>
    <source>
        <strain>J99 / ATCC 700824</strain>
    </source>
</reference>
<organism>
    <name type="scientific">Helicobacter pylori (strain J99 / ATCC 700824)</name>
    <name type="common">Campylobacter pylori J99</name>
    <dbReference type="NCBI Taxonomy" id="85963"/>
    <lineage>
        <taxon>Bacteria</taxon>
        <taxon>Pseudomonadati</taxon>
        <taxon>Campylobacterota</taxon>
        <taxon>Epsilonproteobacteria</taxon>
        <taxon>Campylobacterales</taxon>
        <taxon>Helicobacteraceae</taxon>
        <taxon>Helicobacter</taxon>
    </lineage>
</organism>
<gene>
    <name evidence="1" type="primary">rplF</name>
    <name type="ordered locus">jhp_1224</name>
</gene>
<sequence>MSRIGKRIIEIPSSVQASVEGSKLLFKNNKEKHELETHNRVKITLENNQLSFQPVGEDAQFRAYWGTYGALANNIVIGLSAGFSKTLEVNGVGYKVALGHKTLDLSLGFSHPVKYPIPAGIEMVVEKNTITIKGSDKQQVGQVAAEIRSFRPPEPYKGKGVKYSNEVIIRKAGKTAKK</sequence>
<evidence type="ECO:0000255" key="1">
    <source>
        <dbReference type="HAMAP-Rule" id="MF_01365"/>
    </source>
</evidence>
<evidence type="ECO:0000305" key="2"/>
<protein>
    <recommendedName>
        <fullName evidence="1">Large ribosomal subunit protein uL6</fullName>
    </recommendedName>
    <alternativeName>
        <fullName evidence="2">50S ribosomal protein L6</fullName>
    </alternativeName>
</protein>
<name>RL6_HELPJ</name>
<keyword id="KW-0687">Ribonucleoprotein</keyword>
<keyword id="KW-0689">Ribosomal protein</keyword>
<keyword id="KW-0694">RNA-binding</keyword>
<keyword id="KW-0699">rRNA-binding</keyword>
<dbReference type="EMBL" id="AE001439">
    <property type="protein sequence ID" value="AAD06808.1"/>
    <property type="molecule type" value="Genomic_DNA"/>
</dbReference>
<dbReference type="PIR" id="H71833">
    <property type="entry name" value="H71833"/>
</dbReference>
<dbReference type="RefSeq" id="WP_000086562.1">
    <property type="nucleotide sequence ID" value="NC_000921.1"/>
</dbReference>
<dbReference type="SMR" id="Q9ZJS6"/>
<dbReference type="KEGG" id="hpj:jhp_1224"/>
<dbReference type="eggNOG" id="COG0097">
    <property type="taxonomic scope" value="Bacteria"/>
</dbReference>
<dbReference type="Proteomes" id="UP000000804">
    <property type="component" value="Chromosome"/>
</dbReference>
<dbReference type="GO" id="GO:0022625">
    <property type="term" value="C:cytosolic large ribosomal subunit"/>
    <property type="evidence" value="ECO:0007669"/>
    <property type="project" value="TreeGrafter"/>
</dbReference>
<dbReference type="GO" id="GO:0019843">
    <property type="term" value="F:rRNA binding"/>
    <property type="evidence" value="ECO:0007669"/>
    <property type="project" value="UniProtKB-UniRule"/>
</dbReference>
<dbReference type="GO" id="GO:0003735">
    <property type="term" value="F:structural constituent of ribosome"/>
    <property type="evidence" value="ECO:0007669"/>
    <property type="project" value="InterPro"/>
</dbReference>
<dbReference type="GO" id="GO:0002181">
    <property type="term" value="P:cytoplasmic translation"/>
    <property type="evidence" value="ECO:0007669"/>
    <property type="project" value="TreeGrafter"/>
</dbReference>
<dbReference type="FunFam" id="3.90.930.12:FF:000001">
    <property type="entry name" value="50S ribosomal protein L6"/>
    <property type="match status" value="1"/>
</dbReference>
<dbReference type="Gene3D" id="3.90.930.12">
    <property type="entry name" value="Ribosomal protein L6, alpha-beta domain"/>
    <property type="match status" value="2"/>
</dbReference>
<dbReference type="HAMAP" id="MF_01365_B">
    <property type="entry name" value="Ribosomal_uL6_B"/>
    <property type="match status" value="1"/>
</dbReference>
<dbReference type="InterPro" id="IPR000702">
    <property type="entry name" value="Ribosomal_uL6-like"/>
</dbReference>
<dbReference type="InterPro" id="IPR036789">
    <property type="entry name" value="Ribosomal_uL6-like_a/b-dom_sf"/>
</dbReference>
<dbReference type="InterPro" id="IPR020040">
    <property type="entry name" value="Ribosomal_uL6_a/b-dom"/>
</dbReference>
<dbReference type="InterPro" id="IPR019906">
    <property type="entry name" value="Ribosomal_uL6_bac-type"/>
</dbReference>
<dbReference type="InterPro" id="IPR002358">
    <property type="entry name" value="Ribosomal_uL6_CS"/>
</dbReference>
<dbReference type="NCBIfam" id="TIGR03654">
    <property type="entry name" value="L6_bact"/>
    <property type="match status" value="1"/>
</dbReference>
<dbReference type="PANTHER" id="PTHR11655">
    <property type="entry name" value="60S/50S RIBOSOMAL PROTEIN L6/L9"/>
    <property type="match status" value="1"/>
</dbReference>
<dbReference type="PANTHER" id="PTHR11655:SF14">
    <property type="entry name" value="LARGE RIBOSOMAL SUBUNIT PROTEIN UL6M"/>
    <property type="match status" value="1"/>
</dbReference>
<dbReference type="Pfam" id="PF00347">
    <property type="entry name" value="Ribosomal_L6"/>
    <property type="match status" value="1"/>
</dbReference>
<dbReference type="PIRSF" id="PIRSF002162">
    <property type="entry name" value="Ribosomal_L6"/>
    <property type="match status" value="1"/>
</dbReference>
<dbReference type="PRINTS" id="PR00059">
    <property type="entry name" value="RIBOSOMALL6"/>
</dbReference>
<dbReference type="SUPFAM" id="SSF56053">
    <property type="entry name" value="Ribosomal protein L6"/>
    <property type="match status" value="2"/>
</dbReference>
<dbReference type="PROSITE" id="PS00525">
    <property type="entry name" value="RIBOSOMAL_L6_1"/>
    <property type="match status" value="1"/>
</dbReference>
<proteinExistence type="inferred from homology"/>
<accession>Q9ZJS6</accession>